<reference key="1">
    <citation type="journal article" date="2009" name="PLoS Genet.">
        <title>The genome of Nectria haematococca: contribution of supernumerary chromosomes to gene expansion.</title>
        <authorList>
            <person name="Coleman J.J."/>
            <person name="Rounsley S.D."/>
            <person name="Rodriguez-Carres M."/>
            <person name="Kuo A."/>
            <person name="Wasmann C.C."/>
            <person name="Grimwood J."/>
            <person name="Schmutz J."/>
            <person name="Taga M."/>
            <person name="White G.J."/>
            <person name="Zhou S."/>
            <person name="Schwartz D.C."/>
            <person name="Freitag M."/>
            <person name="Ma L.-J."/>
            <person name="Danchin E.G.J."/>
            <person name="Henrissat B."/>
            <person name="Coutinho P.M."/>
            <person name="Nelson D.R."/>
            <person name="Straney D."/>
            <person name="Napoli C.A."/>
            <person name="Barker B.M."/>
            <person name="Gribskov M."/>
            <person name="Rep M."/>
            <person name="Kroken S."/>
            <person name="Molnar I."/>
            <person name="Rensing C."/>
            <person name="Kennell J.C."/>
            <person name="Zamora J."/>
            <person name="Farman M.L."/>
            <person name="Selker E.U."/>
            <person name="Salamov A."/>
            <person name="Shapiro H."/>
            <person name="Pangilinan J."/>
            <person name="Lindquist E."/>
            <person name="Lamers C."/>
            <person name="Grigoriev I.V."/>
            <person name="Geiser D.M."/>
            <person name="Covert S.F."/>
            <person name="Temporini E."/>
            <person name="VanEtten H.D."/>
        </authorList>
    </citation>
    <scope>NUCLEOTIDE SEQUENCE [LARGE SCALE GENOMIC DNA]</scope>
    <source>
        <strain>ATCC MYA-4622 / CBS 123669 / FGSC 9596 / NRRL 45880 / 77-13-4</strain>
    </source>
</reference>
<name>CBPYA_FUSV7</name>
<keyword id="KW-0121">Carboxypeptidase</keyword>
<keyword id="KW-1015">Disulfide bond</keyword>
<keyword id="KW-0325">Glycoprotein</keyword>
<keyword id="KW-0378">Hydrolase</keyword>
<keyword id="KW-0645">Protease</keyword>
<keyword id="KW-1185">Reference proteome</keyword>
<keyword id="KW-0732">Signal</keyword>
<keyword id="KW-0926">Vacuole</keyword>
<keyword id="KW-0865">Zymogen</keyword>
<proteinExistence type="inferred from homology"/>
<organism>
    <name type="scientific">Fusarium vanettenii (strain ATCC MYA-4622 / CBS 123669 / FGSC 9596 / NRRL 45880 / 77-13-4)</name>
    <name type="common">Fusarium solani subsp. pisi</name>
    <dbReference type="NCBI Taxonomy" id="660122"/>
    <lineage>
        <taxon>Eukaryota</taxon>
        <taxon>Fungi</taxon>
        <taxon>Dikarya</taxon>
        <taxon>Ascomycota</taxon>
        <taxon>Pezizomycotina</taxon>
        <taxon>Sordariomycetes</taxon>
        <taxon>Hypocreomycetidae</taxon>
        <taxon>Hypocreales</taxon>
        <taxon>Nectriaceae</taxon>
        <taxon>Fusarium</taxon>
        <taxon>Fusarium solani species complex</taxon>
        <taxon>Fusarium vanettenii</taxon>
    </lineage>
</organism>
<comment type="function">
    <text evidence="1">Vacuolar carboxypeptidase involved in degradation of small peptides. Digests preferentially peptides containing an aliphatic or hydrophobic residue in P1' position, as well as methionine, leucine or phenylalanine in P1 position of ester substrate (By similarity).</text>
</comment>
<comment type="catalytic activity">
    <reaction evidence="3">
        <text>Release of a C-terminal amino acid with broad specificity.</text>
        <dbReference type="EC" id="3.4.16.5"/>
    </reaction>
</comment>
<comment type="subcellular location">
    <subcellularLocation>
        <location evidence="1">Vacuole</location>
    </subcellularLocation>
</comment>
<comment type="similarity">
    <text evidence="4">Belongs to the peptidase S10 family.</text>
</comment>
<dbReference type="EC" id="3.4.16.5"/>
<dbReference type="EMBL" id="GG698898">
    <property type="protein sequence ID" value="EEU46033.1"/>
    <property type="molecule type" value="Genomic_DNA"/>
</dbReference>
<dbReference type="RefSeq" id="XP_003051746.1">
    <property type="nucleotide sequence ID" value="XM_003051700.1"/>
</dbReference>
<dbReference type="SMR" id="C7YQJ2"/>
<dbReference type="FunCoup" id="C7YQJ2">
    <property type="interactions" value="896"/>
</dbReference>
<dbReference type="ESTHER" id="fusv7-cbpya">
    <property type="family name" value="Carboxypeptidase_S10"/>
</dbReference>
<dbReference type="MEROPS" id="S10.001"/>
<dbReference type="GlyCosmos" id="C7YQJ2">
    <property type="glycosylation" value="2 sites, No reported glycans"/>
</dbReference>
<dbReference type="EnsemblFungi" id="NechaT100110">
    <property type="protein sequence ID" value="NechaP100110"/>
    <property type="gene ID" value="NechaG100110"/>
</dbReference>
<dbReference type="GeneID" id="9673570"/>
<dbReference type="KEGG" id="nhe:NECHADRAFT_100110"/>
<dbReference type="VEuPathDB" id="FungiDB:NECHADRAFT_100110"/>
<dbReference type="eggNOG" id="KOG1282">
    <property type="taxonomic scope" value="Eukaryota"/>
</dbReference>
<dbReference type="HOGENOM" id="CLU_008523_10_4_1"/>
<dbReference type="InParanoid" id="C7YQJ2"/>
<dbReference type="OMA" id="GDWMKPF"/>
<dbReference type="OrthoDB" id="443318at2759"/>
<dbReference type="Proteomes" id="UP000005206">
    <property type="component" value="Unassembled WGS sequence"/>
</dbReference>
<dbReference type="GO" id="GO:0000324">
    <property type="term" value="C:fungal-type vacuole"/>
    <property type="evidence" value="ECO:0007669"/>
    <property type="project" value="TreeGrafter"/>
</dbReference>
<dbReference type="GO" id="GO:0004185">
    <property type="term" value="F:serine-type carboxypeptidase activity"/>
    <property type="evidence" value="ECO:0007669"/>
    <property type="project" value="UniProtKB-EC"/>
</dbReference>
<dbReference type="GO" id="GO:0006508">
    <property type="term" value="P:proteolysis"/>
    <property type="evidence" value="ECO:0007669"/>
    <property type="project" value="UniProtKB-KW"/>
</dbReference>
<dbReference type="FunFam" id="1.10.287.410:FF:000001">
    <property type="entry name" value="Carboxypeptidase Y"/>
    <property type="match status" value="1"/>
</dbReference>
<dbReference type="Gene3D" id="1.10.287.410">
    <property type="match status" value="1"/>
</dbReference>
<dbReference type="Gene3D" id="3.40.50.1820">
    <property type="entry name" value="alpha/beta hydrolase"/>
    <property type="match status" value="1"/>
</dbReference>
<dbReference type="InterPro" id="IPR029058">
    <property type="entry name" value="AB_hydrolase_fold"/>
</dbReference>
<dbReference type="InterPro" id="IPR001563">
    <property type="entry name" value="Peptidase_S10"/>
</dbReference>
<dbReference type="InterPro" id="IPR008442">
    <property type="entry name" value="Propeptide_carboxypepY"/>
</dbReference>
<dbReference type="InterPro" id="IPR018202">
    <property type="entry name" value="Ser_caboxypep_ser_AS"/>
</dbReference>
<dbReference type="PANTHER" id="PTHR11802:SF113">
    <property type="entry name" value="SERINE CARBOXYPEPTIDASE CTSA-4.1"/>
    <property type="match status" value="1"/>
</dbReference>
<dbReference type="PANTHER" id="PTHR11802">
    <property type="entry name" value="SERINE PROTEASE FAMILY S10 SERINE CARBOXYPEPTIDASE"/>
    <property type="match status" value="1"/>
</dbReference>
<dbReference type="Pfam" id="PF05388">
    <property type="entry name" value="Carbpep_Y_N"/>
    <property type="match status" value="1"/>
</dbReference>
<dbReference type="Pfam" id="PF00450">
    <property type="entry name" value="Peptidase_S10"/>
    <property type="match status" value="1"/>
</dbReference>
<dbReference type="PRINTS" id="PR00724">
    <property type="entry name" value="CRBOXYPTASEC"/>
</dbReference>
<dbReference type="SUPFAM" id="SSF53474">
    <property type="entry name" value="alpha/beta-Hydrolases"/>
    <property type="match status" value="1"/>
</dbReference>
<dbReference type="PROSITE" id="PS00131">
    <property type="entry name" value="CARBOXYPEPT_SER_SER"/>
    <property type="match status" value="1"/>
</dbReference>
<evidence type="ECO:0000250" key="1"/>
<evidence type="ECO:0000255" key="2"/>
<evidence type="ECO:0000255" key="3">
    <source>
        <dbReference type="PROSITE-ProRule" id="PRU10074"/>
    </source>
</evidence>
<evidence type="ECO:0000305" key="4"/>
<accession>C7YQJ2</accession>
<protein>
    <recommendedName>
        <fullName>Carboxypeptidase Y homolog A</fullName>
        <ecNumber>3.4.16.5</ecNumber>
    </recommendedName>
</protein>
<sequence length="537" mass="60161">MRLSTSALVLGAASSAVAFDQKVLGDLKKPAIDLDLSSWLNFGEEITAEAKAVWEEVSMLAPDAVEAFKKQVIGTKPKKANRRPDNHWDHVVKGADVQSIWVDKNNEKHRKVGGRLDNYNLRAKKVDPSKLGVDKVKQYSGYLDDEEQDKHLFYWFFESRNDPENDPVVLWLNGGPGCSSLTGLFLELGPASINKKIEIVNNPWSWNNNASVIFLDQPVNVGYSYSGGSVSNTVAAGKDIYALLTLFFHQFPEYAKQDFHIAGESYAGHYIPVFANEILSHEDRNINLKSVLIGNGLTDGYTQYEYYRPMACGEGGYPSVLSESECQSMDNALPRCQSLIKGCYESGSAWSCVPASIYCNNAMMGPYQRTGRNVYDIRGNCEDSSNLCYSGLGYIAEYLNRQDVQDALGAEVSSYDSCNMDINRNFLFAGDWMQPYHQVVPNLLEKIPVLIYAGDADFICNWLGNQAWTNKLEWPGHKDFKNADIKNLKVEGKEYGKIKTSGNFTFMQIYGAGHMVPMDQPEASSDFFNRWLGGEWF</sequence>
<feature type="signal peptide" evidence="2">
    <location>
        <begin position="1"/>
        <end position="17"/>
    </location>
</feature>
<feature type="propeptide" id="PRO_0000407455" evidence="1">
    <location>
        <begin position="18"/>
        <end position="124"/>
    </location>
</feature>
<feature type="chain" id="PRO_0000407456" description="Carboxypeptidase Y homolog A">
    <location>
        <begin position="125"/>
        <end position="537"/>
    </location>
</feature>
<feature type="active site" evidence="3">
    <location>
        <position position="265"/>
    </location>
</feature>
<feature type="active site" evidence="3">
    <location>
        <position position="457"/>
    </location>
</feature>
<feature type="active site" evidence="3">
    <location>
        <position position="514"/>
    </location>
</feature>
<feature type="glycosylation site" description="N-linked (GlcNAc...) asparagine" evidence="2">
    <location>
        <position position="209"/>
    </location>
</feature>
<feature type="glycosylation site" description="N-linked (GlcNAc...) asparagine" evidence="2">
    <location>
        <position position="503"/>
    </location>
</feature>
<feature type="disulfide bond" evidence="1">
    <location>
        <begin position="178"/>
        <end position="418"/>
    </location>
</feature>
<feature type="disulfide bond" evidence="1">
    <location>
        <begin position="312"/>
        <end position="326"/>
    </location>
</feature>
<feature type="disulfide bond" evidence="1">
    <location>
        <begin position="336"/>
        <end position="359"/>
    </location>
</feature>
<feature type="disulfide bond" evidence="1">
    <location>
        <begin position="343"/>
        <end position="352"/>
    </location>
</feature>
<feature type="disulfide bond" evidence="1">
    <location>
        <begin position="381"/>
        <end position="388"/>
    </location>
</feature>
<gene>
    <name type="primary">CPYA</name>
    <name type="ORF">NECHADRAFT_100110</name>
</gene>